<gene>
    <name evidence="1" type="primary">garL</name>
    <name type="ordered locus">UTI89_C3557</name>
</gene>
<dbReference type="EC" id="4.1.2.20" evidence="1"/>
<dbReference type="EMBL" id="CP000243">
    <property type="protein sequence ID" value="ABE09003.1"/>
    <property type="molecule type" value="Genomic_DNA"/>
</dbReference>
<dbReference type="RefSeq" id="WP_001058227.1">
    <property type="nucleotide sequence ID" value="NZ_CP064825.1"/>
</dbReference>
<dbReference type="SMR" id="Q1R6L1"/>
<dbReference type="GeneID" id="93778860"/>
<dbReference type="KEGG" id="eci:UTI89_C3557"/>
<dbReference type="HOGENOM" id="CLU_059964_1_0_6"/>
<dbReference type="UniPathway" id="UPA00565">
    <property type="reaction ID" value="UER00630"/>
</dbReference>
<dbReference type="Proteomes" id="UP000001952">
    <property type="component" value="Chromosome"/>
</dbReference>
<dbReference type="GO" id="GO:0005737">
    <property type="term" value="C:cytoplasm"/>
    <property type="evidence" value="ECO:0007669"/>
    <property type="project" value="TreeGrafter"/>
</dbReference>
<dbReference type="GO" id="GO:0008672">
    <property type="term" value="F:2-dehydro-3-deoxyglucarate aldolase activity"/>
    <property type="evidence" value="ECO:0007669"/>
    <property type="project" value="UniProtKB-UniRule"/>
</dbReference>
<dbReference type="GO" id="GO:0000287">
    <property type="term" value="F:magnesium ion binding"/>
    <property type="evidence" value="ECO:0007669"/>
    <property type="project" value="UniProtKB-UniRule"/>
</dbReference>
<dbReference type="GO" id="GO:0042838">
    <property type="term" value="P:D-glucarate catabolic process"/>
    <property type="evidence" value="ECO:0007669"/>
    <property type="project" value="UniProtKB-UniRule"/>
</dbReference>
<dbReference type="GO" id="GO:0046392">
    <property type="term" value="P:galactarate catabolic process"/>
    <property type="evidence" value="ECO:0007669"/>
    <property type="project" value="UniProtKB-UniRule"/>
</dbReference>
<dbReference type="FunFam" id="3.20.20.60:FF:000004">
    <property type="entry name" value="5-keto-4-deoxy-D-glucarate aldolase"/>
    <property type="match status" value="1"/>
</dbReference>
<dbReference type="Gene3D" id="3.20.20.60">
    <property type="entry name" value="Phosphoenolpyruvate-binding domains"/>
    <property type="match status" value="1"/>
</dbReference>
<dbReference type="HAMAP" id="MF_01291">
    <property type="entry name" value="KDGluc_aldolase"/>
    <property type="match status" value="1"/>
</dbReference>
<dbReference type="InterPro" id="IPR005000">
    <property type="entry name" value="Aldolase/citrate-lyase_domain"/>
</dbReference>
<dbReference type="InterPro" id="IPR017648">
    <property type="entry name" value="GarL"/>
</dbReference>
<dbReference type="InterPro" id="IPR050251">
    <property type="entry name" value="HpcH-HpaI_aldolase"/>
</dbReference>
<dbReference type="InterPro" id="IPR015813">
    <property type="entry name" value="Pyrv/PenolPyrv_kinase-like_dom"/>
</dbReference>
<dbReference type="InterPro" id="IPR040442">
    <property type="entry name" value="Pyrv_kinase-like_dom_sf"/>
</dbReference>
<dbReference type="NCBIfam" id="TIGR03239">
    <property type="entry name" value="GarL"/>
    <property type="match status" value="1"/>
</dbReference>
<dbReference type="NCBIfam" id="NF007849">
    <property type="entry name" value="PRK10558.1"/>
    <property type="match status" value="1"/>
</dbReference>
<dbReference type="PANTHER" id="PTHR30502">
    <property type="entry name" value="2-KETO-3-DEOXY-L-RHAMNONATE ALDOLASE"/>
    <property type="match status" value="1"/>
</dbReference>
<dbReference type="PANTHER" id="PTHR30502:SF4">
    <property type="entry name" value="5-KETO-4-DEOXY-D-GLUCARATE ALDOLASE"/>
    <property type="match status" value="1"/>
</dbReference>
<dbReference type="Pfam" id="PF03328">
    <property type="entry name" value="HpcH_HpaI"/>
    <property type="match status" value="1"/>
</dbReference>
<dbReference type="SUPFAM" id="SSF51621">
    <property type="entry name" value="Phosphoenolpyruvate/pyruvate domain"/>
    <property type="match status" value="1"/>
</dbReference>
<comment type="function">
    <text evidence="1">Catalyzes the reversible retro-aldol cleavage of both 5-keto-4-deoxy-D-glucarate and 2-keto-3-deoxy-D-glucarate to pyruvate and tartronic semialdehyde.</text>
</comment>
<comment type="catalytic activity">
    <reaction evidence="1">
        <text>5-dehydro-4-deoxy-D-glucarate = 2-hydroxy-3-oxopropanoate + pyruvate</text>
        <dbReference type="Rhea" id="RHEA:27726"/>
        <dbReference type="ChEBI" id="CHEBI:15361"/>
        <dbReference type="ChEBI" id="CHEBI:42819"/>
        <dbReference type="ChEBI" id="CHEBI:57978"/>
    </reaction>
</comment>
<comment type="catalytic activity">
    <reaction evidence="1">
        <text>2-dehydro-3-deoxy-D-glucarate = 2-hydroxy-3-oxopropanoate + pyruvate</text>
        <dbReference type="Rhea" id="RHEA:10268"/>
        <dbReference type="ChEBI" id="CHEBI:15361"/>
        <dbReference type="ChEBI" id="CHEBI:57978"/>
        <dbReference type="ChEBI" id="CHEBI:58098"/>
        <dbReference type="EC" id="4.1.2.20"/>
    </reaction>
</comment>
<comment type="cofactor">
    <cofactor evidence="1">
        <name>Mg(2+)</name>
        <dbReference type="ChEBI" id="CHEBI:18420"/>
    </cofactor>
    <text evidence="1">Binds 1 Mg(2+) ion per subunit.</text>
</comment>
<comment type="pathway">
    <text evidence="1">Carbohydrate acid metabolism; galactarate degradation; D-glycerate from galactarate: step 2/3.</text>
</comment>
<comment type="subunit">
    <text evidence="1">Homohexamer; trimer of dimers.</text>
</comment>
<comment type="similarity">
    <text evidence="1">Belongs to the HpcH/HpaI aldolase family. KDGluc aldolase subfamily.</text>
</comment>
<reference key="1">
    <citation type="journal article" date="2006" name="Proc. Natl. Acad. Sci. U.S.A.">
        <title>Identification of genes subject to positive selection in uropathogenic strains of Escherichia coli: a comparative genomics approach.</title>
        <authorList>
            <person name="Chen S.L."/>
            <person name="Hung C.-S."/>
            <person name="Xu J."/>
            <person name="Reigstad C.S."/>
            <person name="Magrini V."/>
            <person name="Sabo A."/>
            <person name="Blasiar D."/>
            <person name="Bieri T."/>
            <person name="Meyer R.R."/>
            <person name="Ozersky P."/>
            <person name="Armstrong J.R."/>
            <person name="Fulton R.S."/>
            <person name="Latreille J.P."/>
            <person name="Spieth J."/>
            <person name="Hooton T.M."/>
            <person name="Mardis E.R."/>
            <person name="Hultgren S.J."/>
            <person name="Gordon J.I."/>
        </authorList>
    </citation>
    <scope>NUCLEOTIDE SEQUENCE [LARGE SCALE GENOMIC DNA]</scope>
    <source>
        <strain>UTI89 / UPEC</strain>
    </source>
</reference>
<sequence>MNNDVFPNKFKAALAAKQVQIGCWSALSNPISTEVLGLAGFDWLVLDGEHAPNDISTFIPQLMALKGSASAPVVRVPTNEPVIIKRLLDIGFYNFLIPFVETKEEAEQAVASTRYPPEGIRGVSVSHRANMFGTVADYFAQSNKNITILVQIESQQGVDNVDAIAATEGVDGIFVGPSDLAAALGHLGNASHPDVQKAIQHIFNRASAHGKPSGILAPVEADARRYLEWGATFVAVGSDLGVFRSATQKLADTFKK</sequence>
<keyword id="KW-0456">Lyase</keyword>
<keyword id="KW-0460">Magnesium</keyword>
<keyword id="KW-0479">Metal-binding</keyword>
<proteinExistence type="inferred from homology"/>
<feature type="chain" id="PRO_0000353145" description="5-keto-4-deoxy-D-glucarate aldolase">
    <location>
        <begin position="1"/>
        <end position="256"/>
    </location>
</feature>
<feature type="active site" description="Proton acceptor" evidence="1">
    <location>
        <position position="50"/>
    </location>
</feature>
<feature type="binding site" evidence="1">
    <location>
        <position position="151"/>
    </location>
    <ligand>
        <name>substrate</name>
    </ligand>
</feature>
<feature type="binding site" evidence="1">
    <location>
        <position position="153"/>
    </location>
    <ligand>
        <name>Mg(2+)</name>
        <dbReference type="ChEBI" id="CHEBI:18420"/>
    </ligand>
</feature>
<feature type="binding site" evidence="1">
    <location>
        <position position="178"/>
    </location>
    <ligand>
        <name>substrate</name>
    </ligand>
</feature>
<feature type="binding site" evidence="1">
    <location>
        <position position="179"/>
    </location>
    <ligand>
        <name>Mg(2+)</name>
        <dbReference type="ChEBI" id="CHEBI:18420"/>
    </ligand>
</feature>
<feature type="binding site" evidence="1">
    <location>
        <position position="179"/>
    </location>
    <ligand>
        <name>substrate</name>
    </ligand>
</feature>
<feature type="site" description="Transition state stabilizer" evidence="1">
    <location>
        <position position="75"/>
    </location>
</feature>
<feature type="site" description="Increases basicity of active site His" evidence="1">
    <location>
        <position position="89"/>
    </location>
</feature>
<organism>
    <name type="scientific">Escherichia coli (strain UTI89 / UPEC)</name>
    <dbReference type="NCBI Taxonomy" id="364106"/>
    <lineage>
        <taxon>Bacteria</taxon>
        <taxon>Pseudomonadati</taxon>
        <taxon>Pseudomonadota</taxon>
        <taxon>Gammaproteobacteria</taxon>
        <taxon>Enterobacterales</taxon>
        <taxon>Enterobacteriaceae</taxon>
        <taxon>Escherichia</taxon>
    </lineage>
</organism>
<accession>Q1R6L1</accession>
<evidence type="ECO:0000255" key="1">
    <source>
        <dbReference type="HAMAP-Rule" id="MF_01291"/>
    </source>
</evidence>
<name>GARL_ECOUT</name>
<protein>
    <recommendedName>
        <fullName evidence="1">5-keto-4-deoxy-D-glucarate aldolase</fullName>
        <shortName evidence="1">KDGluc aldolase</shortName>
        <shortName evidence="1">KDGlucA</shortName>
        <ecNumber evidence="1">4.1.2.20</ecNumber>
    </recommendedName>
    <alternativeName>
        <fullName evidence="1">2-dehydro-3-deoxy-D-glucarate aldolase</fullName>
    </alternativeName>
    <alternativeName>
        <fullName evidence="1">2-keto-3-deoxy-D-glucarate aldolase</fullName>
    </alternativeName>
    <alternativeName>
        <fullName evidence="1">5-dehydro-4-deoxy-D-glucarate aldolase</fullName>
    </alternativeName>
    <alternativeName>
        <fullName evidence="1">Alpha-keto-beta-deoxy-D-glucarate aldolase</fullName>
    </alternativeName>
</protein>